<protein>
    <recommendedName>
        <fullName evidence="1">Translation factor GUF1 homolog, mitochondrial</fullName>
        <ecNumber>3.6.5.-</ecNumber>
    </recommendedName>
    <alternativeName>
        <fullName evidence="1">Elongation factor 4 homolog</fullName>
        <shortName evidence="1">EF-4</shortName>
    </alternativeName>
    <alternativeName>
        <fullName evidence="1">GTPase GUF1 homolog</fullName>
    </alternativeName>
    <alternativeName>
        <fullName evidence="1">Ribosomal back-translocase</fullName>
    </alternativeName>
</protein>
<name>GUF1_IXOSC</name>
<feature type="chain" id="PRO_0000402839" description="Translation factor GUF1 homolog, mitochondrial">
    <location>
        <begin position="1"/>
        <end position="661"/>
    </location>
</feature>
<feature type="domain" description="tr-type G">
    <location>
        <begin position="59"/>
        <end position="242"/>
    </location>
</feature>
<feature type="binding site" evidence="1">
    <location>
        <begin position="68"/>
        <end position="75"/>
    </location>
    <ligand>
        <name>GTP</name>
        <dbReference type="ChEBI" id="CHEBI:37565"/>
    </ligand>
</feature>
<feature type="binding site" evidence="1">
    <location>
        <begin position="135"/>
        <end position="139"/>
    </location>
    <ligand>
        <name>GTP</name>
        <dbReference type="ChEBI" id="CHEBI:37565"/>
    </ligand>
</feature>
<feature type="binding site" evidence="1">
    <location>
        <begin position="189"/>
        <end position="192"/>
    </location>
    <ligand>
        <name>GTP</name>
        <dbReference type="ChEBI" id="CHEBI:37565"/>
    </ligand>
</feature>
<reference key="1">
    <citation type="submission" date="2008-03" db="EMBL/GenBank/DDBJ databases">
        <title>Annotation of Ixodes scapularis.</title>
        <authorList>
            <consortium name="Ixodes scapularis Genome Project Consortium"/>
            <person name="Caler E."/>
            <person name="Hannick L.I."/>
            <person name="Bidwell S."/>
            <person name="Joardar V."/>
            <person name="Thiagarajan M."/>
            <person name="Amedeo P."/>
            <person name="Galinsky K.J."/>
            <person name="Schobel S."/>
            <person name="Inman J."/>
            <person name="Hostetler J."/>
            <person name="Miller J."/>
            <person name="Hammond M."/>
            <person name="Megy K."/>
            <person name="Lawson D."/>
            <person name="Kodira C."/>
            <person name="Sutton G."/>
            <person name="Meyer J."/>
            <person name="Hill C.A."/>
            <person name="Birren B."/>
            <person name="Nene V."/>
            <person name="Collins F."/>
            <person name="Alarcon-Chaidez F."/>
            <person name="Wikel S."/>
            <person name="Strausberg R."/>
        </authorList>
    </citation>
    <scope>NUCLEOTIDE SEQUENCE [LARGE SCALE GENOMIC DNA]</scope>
    <source>
        <strain>Wikel</strain>
    </source>
</reference>
<sequence length="661" mass="73903">MFRTPHTLQFCSVHYKTFIDAIHALQSRISQKVLCRSCSSRVSGPAKKYDVDPSQFPQENIRNFCIVAHVDHGKSTLSDRLLEFTDTIRTSKDNQQVLDRLPVERERGITVKAQTVSMVYHRPGHESPFLLNLIDTPGHVDFSYEVLRSVAVCQGVILLVDANQGVQAQTVANFNMAFCSDLTILPVLNKVDLKNADVEGVTSQMENLFGTRREDVLKVSAKLGTGVEELIEAIIDRIPSPKGDADAKFRGFLLDSWYDRYRGVIALLMAVDGTLRLGDEIISHMTGTSYTVRDLGFLNPLETPTAMLCAGQAGYVVANMRSPKEAHVGDTLSHKSADIKPLPKLEESKPMVFAGIYPEDQSQNNELRSAIDRLLLNDPSVQVSIESNPALGQGWRLGFLGLLHMDVFCQRLDQEFDAQVVVTAPSVSYKVKVHGAKNIKKYGGEMVTVNNPLHLPDRSIIREYYEPMAFGTIITPGTYLRDVTSLCVDRRGVPKSTQDVDDNTILLQYKFPLNEIIVDFYDELKSITSGYASFDYEETGYEESSLVQMQILINGKVVEELTTIVHTTRAQRVGRSMLLKLKECIPQQLYAVALQAAVGAKVLAREDIRALKKNVLAKCYGGDITRKVKLLKRHSEKQKKLRLIGNVEVPRDAFIKVLKRT</sequence>
<comment type="function">
    <text evidence="1">Promotes mitochondrial protein synthesis. May act as a fidelity factor of the translation reaction, by catalyzing a one-codon backward translocation of tRNAs on improperly translocated ribosomes. Binds to mitochondrial ribosomes in a GTP-dependent manner.</text>
</comment>
<comment type="catalytic activity">
    <reaction evidence="1">
        <text>GTP + H2O = GDP + phosphate + H(+)</text>
        <dbReference type="Rhea" id="RHEA:19669"/>
        <dbReference type="ChEBI" id="CHEBI:15377"/>
        <dbReference type="ChEBI" id="CHEBI:15378"/>
        <dbReference type="ChEBI" id="CHEBI:37565"/>
        <dbReference type="ChEBI" id="CHEBI:43474"/>
        <dbReference type="ChEBI" id="CHEBI:58189"/>
    </reaction>
</comment>
<comment type="subcellular location">
    <subcellularLocation>
        <location evidence="1">Mitochondrion inner membrane</location>
        <topology evidence="1">Peripheral membrane protein</topology>
        <orientation evidence="1">Matrix side</orientation>
    </subcellularLocation>
</comment>
<comment type="miscellaneous">
    <text evidence="1">This protein may be expected to contain an N-terminal transit peptide but none has been predicted.</text>
</comment>
<comment type="similarity">
    <text evidence="2">Belongs to the TRAFAC class translation factor GTPase superfamily. Classic translation factor GTPase family. LepA subfamily.</text>
</comment>
<evidence type="ECO:0000255" key="1">
    <source>
        <dbReference type="HAMAP-Rule" id="MF_03137"/>
    </source>
</evidence>
<evidence type="ECO:0000305" key="2"/>
<proteinExistence type="inferred from homology"/>
<keyword id="KW-0342">GTP-binding</keyword>
<keyword id="KW-0378">Hydrolase</keyword>
<keyword id="KW-0472">Membrane</keyword>
<keyword id="KW-0496">Mitochondrion</keyword>
<keyword id="KW-0999">Mitochondrion inner membrane</keyword>
<keyword id="KW-0547">Nucleotide-binding</keyword>
<keyword id="KW-0648">Protein biosynthesis</keyword>
<keyword id="KW-1185">Reference proteome</keyword>
<organism>
    <name type="scientific">Ixodes scapularis</name>
    <name type="common">Black-legged tick</name>
    <name type="synonym">Deer tick</name>
    <dbReference type="NCBI Taxonomy" id="6945"/>
    <lineage>
        <taxon>Eukaryota</taxon>
        <taxon>Metazoa</taxon>
        <taxon>Ecdysozoa</taxon>
        <taxon>Arthropoda</taxon>
        <taxon>Chelicerata</taxon>
        <taxon>Arachnida</taxon>
        <taxon>Acari</taxon>
        <taxon>Parasitiformes</taxon>
        <taxon>Ixodida</taxon>
        <taxon>Ixodoidea</taxon>
        <taxon>Ixodidae</taxon>
        <taxon>Ixodinae</taxon>
        <taxon>Ixodes</taxon>
    </lineage>
</organism>
<gene>
    <name type="ORF">ISCW003920</name>
</gene>
<accession>B7PJS6</accession>
<dbReference type="EC" id="3.6.5.-"/>
<dbReference type="EMBL" id="DS727897">
    <property type="protein sequence ID" value="EEC06848.1"/>
    <property type="molecule type" value="Genomic_DNA"/>
</dbReference>
<dbReference type="RefSeq" id="XP_002408440.1">
    <property type="nucleotide sequence ID" value="XM_002408396.1"/>
</dbReference>
<dbReference type="SMR" id="B7PJS6"/>
<dbReference type="FunCoup" id="B7PJS6">
    <property type="interactions" value="1399"/>
</dbReference>
<dbReference type="STRING" id="6945.B7PJS6"/>
<dbReference type="PaxDb" id="6945-B7PJS6"/>
<dbReference type="EnsemblMetazoa" id="ISCW003920-RA">
    <property type="protein sequence ID" value="ISCW003920-PA"/>
    <property type="gene ID" value="ISCW003920"/>
</dbReference>
<dbReference type="KEGG" id="isc:8029985"/>
<dbReference type="CTD" id="3771960"/>
<dbReference type="VEuPathDB" id="VectorBase:ISCI003920"/>
<dbReference type="VEuPathDB" id="VectorBase:ISCP_014060"/>
<dbReference type="VEuPathDB" id="VectorBase:ISCW003920"/>
<dbReference type="HOGENOM" id="CLU_009995_3_3_1"/>
<dbReference type="InParanoid" id="B7PJS6"/>
<dbReference type="OrthoDB" id="1074at2759"/>
<dbReference type="PhylomeDB" id="B7PJS6"/>
<dbReference type="Proteomes" id="UP000001555">
    <property type="component" value="Unassembled WGS sequence"/>
</dbReference>
<dbReference type="GO" id="GO:0005743">
    <property type="term" value="C:mitochondrial inner membrane"/>
    <property type="evidence" value="ECO:0007669"/>
    <property type="project" value="UniProtKB-SubCell"/>
</dbReference>
<dbReference type="GO" id="GO:0005759">
    <property type="term" value="C:mitochondrial matrix"/>
    <property type="evidence" value="ECO:0007669"/>
    <property type="project" value="UniProtKB-UniRule"/>
</dbReference>
<dbReference type="GO" id="GO:0005739">
    <property type="term" value="C:mitochondrion"/>
    <property type="evidence" value="ECO:0000318"/>
    <property type="project" value="GO_Central"/>
</dbReference>
<dbReference type="GO" id="GO:0005525">
    <property type="term" value="F:GTP binding"/>
    <property type="evidence" value="ECO:0007669"/>
    <property type="project" value="UniProtKB-UniRule"/>
</dbReference>
<dbReference type="GO" id="GO:0003924">
    <property type="term" value="F:GTPase activity"/>
    <property type="evidence" value="ECO:0007669"/>
    <property type="project" value="UniProtKB-UniRule"/>
</dbReference>
<dbReference type="GO" id="GO:0097177">
    <property type="term" value="F:mitochondrial ribosome binding"/>
    <property type="evidence" value="ECO:0000318"/>
    <property type="project" value="GO_Central"/>
</dbReference>
<dbReference type="GO" id="GO:0045727">
    <property type="term" value="P:positive regulation of translation"/>
    <property type="evidence" value="ECO:0000318"/>
    <property type="project" value="GO_Central"/>
</dbReference>
<dbReference type="GO" id="GO:0006412">
    <property type="term" value="P:translation"/>
    <property type="evidence" value="ECO:0007669"/>
    <property type="project" value="UniProtKB-KW"/>
</dbReference>
<dbReference type="CDD" id="cd03699">
    <property type="entry name" value="EF4_II"/>
    <property type="match status" value="1"/>
</dbReference>
<dbReference type="CDD" id="cd16260">
    <property type="entry name" value="EF4_III"/>
    <property type="match status" value="1"/>
</dbReference>
<dbReference type="CDD" id="cd01890">
    <property type="entry name" value="LepA"/>
    <property type="match status" value="1"/>
</dbReference>
<dbReference type="CDD" id="cd03709">
    <property type="entry name" value="lepA_C"/>
    <property type="match status" value="1"/>
</dbReference>
<dbReference type="FunFam" id="3.40.50.300:FF:000078">
    <property type="entry name" value="Elongation factor 4"/>
    <property type="match status" value="1"/>
</dbReference>
<dbReference type="FunFam" id="2.40.30.10:FF:000015">
    <property type="entry name" value="Translation factor GUF1, mitochondrial"/>
    <property type="match status" value="1"/>
</dbReference>
<dbReference type="FunFam" id="3.30.70.240:FF:000007">
    <property type="entry name" value="Translation factor GUF1, mitochondrial"/>
    <property type="match status" value="1"/>
</dbReference>
<dbReference type="FunFam" id="3.30.70.2570:FF:000001">
    <property type="entry name" value="Translation factor GUF1, mitochondrial"/>
    <property type="match status" value="1"/>
</dbReference>
<dbReference type="FunFam" id="3.30.70.870:FF:000004">
    <property type="entry name" value="Translation factor GUF1, mitochondrial"/>
    <property type="match status" value="1"/>
</dbReference>
<dbReference type="Gene3D" id="3.30.70.240">
    <property type="match status" value="1"/>
</dbReference>
<dbReference type="Gene3D" id="3.30.70.2570">
    <property type="entry name" value="Elongation factor 4, C-terminal domain"/>
    <property type="match status" value="1"/>
</dbReference>
<dbReference type="Gene3D" id="3.30.70.870">
    <property type="entry name" value="Elongation Factor G (Translational Gtpase), domain 3"/>
    <property type="match status" value="1"/>
</dbReference>
<dbReference type="Gene3D" id="3.40.50.300">
    <property type="entry name" value="P-loop containing nucleotide triphosphate hydrolases"/>
    <property type="match status" value="1"/>
</dbReference>
<dbReference type="Gene3D" id="2.40.30.10">
    <property type="entry name" value="Translation factors"/>
    <property type="match status" value="1"/>
</dbReference>
<dbReference type="HAMAP" id="MF_00071">
    <property type="entry name" value="LepA"/>
    <property type="match status" value="1"/>
</dbReference>
<dbReference type="InterPro" id="IPR006297">
    <property type="entry name" value="EF-4"/>
</dbReference>
<dbReference type="InterPro" id="IPR041095">
    <property type="entry name" value="EFG_II"/>
</dbReference>
<dbReference type="InterPro" id="IPR035647">
    <property type="entry name" value="EFG_III/V"/>
</dbReference>
<dbReference type="InterPro" id="IPR000640">
    <property type="entry name" value="EFG_V-like"/>
</dbReference>
<dbReference type="InterPro" id="IPR031157">
    <property type="entry name" value="G_TR_CS"/>
</dbReference>
<dbReference type="InterPro" id="IPR038363">
    <property type="entry name" value="LepA_C_sf"/>
</dbReference>
<dbReference type="InterPro" id="IPR013842">
    <property type="entry name" value="LepA_CTD"/>
</dbReference>
<dbReference type="InterPro" id="IPR035654">
    <property type="entry name" value="LepA_IV"/>
</dbReference>
<dbReference type="InterPro" id="IPR027417">
    <property type="entry name" value="P-loop_NTPase"/>
</dbReference>
<dbReference type="InterPro" id="IPR005225">
    <property type="entry name" value="Small_GTP-bd"/>
</dbReference>
<dbReference type="InterPro" id="IPR000795">
    <property type="entry name" value="T_Tr_GTP-bd_dom"/>
</dbReference>
<dbReference type="InterPro" id="IPR009000">
    <property type="entry name" value="Transl_B-barrel_sf"/>
</dbReference>
<dbReference type="NCBIfam" id="TIGR01393">
    <property type="entry name" value="lepA"/>
    <property type="match status" value="1"/>
</dbReference>
<dbReference type="NCBIfam" id="TIGR00231">
    <property type="entry name" value="small_GTP"/>
    <property type="match status" value="1"/>
</dbReference>
<dbReference type="PANTHER" id="PTHR43512:SF7">
    <property type="entry name" value="TRANSLATION FACTOR GUF1, MITOCHONDRIAL"/>
    <property type="match status" value="1"/>
</dbReference>
<dbReference type="PANTHER" id="PTHR43512">
    <property type="entry name" value="TRANSLATION FACTOR GUF1-RELATED"/>
    <property type="match status" value="1"/>
</dbReference>
<dbReference type="Pfam" id="PF00679">
    <property type="entry name" value="EFG_C"/>
    <property type="match status" value="1"/>
</dbReference>
<dbReference type="Pfam" id="PF14492">
    <property type="entry name" value="EFG_III"/>
    <property type="match status" value="1"/>
</dbReference>
<dbReference type="Pfam" id="PF00009">
    <property type="entry name" value="GTP_EFTU"/>
    <property type="match status" value="1"/>
</dbReference>
<dbReference type="Pfam" id="PF06421">
    <property type="entry name" value="LepA_C"/>
    <property type="match status" value="1"/>
</dbReference>
<dbReference type="PRINTS" id="PR00315">
    <property type="entry name" value="ELONGATNFCT"/>
</dbReference>
<dbReference type="SUPFAM" id="SSF54980">
    <property type="entry name" value="EF-G C-terminal domain-like"/>
    <property type="match status" value="2"/>
</dbReference>
<dbReference type="SUPFAM" id="SSF52540">
    <property type="entry name" value="P-loop containing nucleoside triphosphate hydrolases"/>
    <property type="match status" value="1"/>
</dbReference>
<dbReference type="SUPFAM" id="SSF50447">
    <property type="entry name" value="Translation proteins"/>
    <property type="match status" value="1"/>
</dbReference>
<dbReference type="PROSITE" id="PS00301">
    <property type="entry name" value="G_TR_1"/>
    <property type="match status" value="1"/>
</dbReference>
<dbReference type="PROSITE" id="PS51722">
    <property type="entry name" value="G_TR_2"/>
    <property type="match status" value="1"/>
</dbReference>